<accession>Q8VC69</accession>
<accession>Q61185</accession>
<proteinExistence type="evidence at protein level"/>
<sequence length="545" mass="60013">MAFNDLLKQVGGVGRFQLIQVTMVVAPLLLMASHNTLQNFTAAIPAHHCRPPANANLSKDGGLEAWLPLDKQGRPESCLRFPFPHNGTEANGTGVTEPCLDGWVYDNSTFPSTIVTEWNLVCSHRAFRQLAQSLFMVGVLLGAMMFGYLADRLGRRKVLILNYLQTAVSGTCAAYAPNYTVYCIFRLLSGMSLASIAINCMTLNMEWMPIHTRAYVGTLIGYVYSLGQFLLAGIAYAVPHWRHLQLAVSVPFFVAFIYSWFFIESARWYSSSGRLDLTLRALQRVARINGKQEEGAKLSIEVLQTSLQKELTLNKGQASAMELLRCPTLRRLFLCLSMLWFATSFAYYGLVMDLQGFGVSMYLIQVIFGAVDLPAKFVCFLVINSMGRRPAQLASLLLAGICILVNGIIPRGHTIIRTSLAVLGKGCLASSFNCIFLYTGELYPTMIRQTGLGMGSTMARVGSIVSPLISMTAEFYPSIPLFIFGAVPVAASAVTALLPETLGQPLPDTVQDLKSRSRGKQKQQQLEQQKQMIPLQVSTQEKNGL</sequence>
<reference key="1">
    <citation type="journal article" date="1997" name="J. Biol. Chem.">
        <title>Molecular cloning and characterization of NKT, a gene product related to the organic cation transporter family that is almost exclusively expressed in the kidney.</title>
        <authorList>
            <person name="Lopez-Nieto C.E."/>
            <person name="You G."/>
            <person name="Bush K.T."/>
            <person name="Barros E.J."/>
            <person name="Beier D.R."/>
            <person name="Nigam S.K."/>
        </authorList>
    </citation>
    <scope>NUCLEOTIDE SEQUENCE [MRNA]</scope>
    <scope>TISSUE SPECIFICITY</scope>
    <scope>DEVELOPMENTAL STAGE</scope>
    <scope>MISCELLANEOUS</scope>
    <source>
        <strain>BALB/cJ</strain>
        <tissue>Kidney</tissue>
    </source>
</reference>
<reference key="2">
    <citation type="journal article" date="2005" name="Science">
        <title>The transcriptional landscape of the mammalian genome.</title>
        <authorList>
            <person name="Carninci P."/>
            <person name="Kasukawa T."/>
            <person name="Katayama S."/>
            <person name="Gough J."/>
            <person name="Frith M.C."/>
            <person name="Maeda N."/>
            <person name="Oyama R."/>
            <person name="Ravasi T."/>
            <person name="Lenhard B."/>
            <person name="Wells C."/>
            <person name="Kodzius R."/>
            <person name="Shimokawa K."/>
            <person name="Bajic V.B."/>
            <person name="Brenner S.E."/>
            <person name="Batalov S."/>
            <person name="Forrest A.R."/>
            <person name="Zavolan M."/>
            <person name="Davis M.J."/>
            <person name="Wilming L.G."/>
            <person name="Aidinis V."/>
            <person name="Allen J.E."/>
            <person name="Ambesi-Impiombato A."/>
            <person name="Apweiler R."/>
            <person name="Aturaliya R.N."/>
            <person name="Bailey T.L."/>
            <person name="Bansal M."/>
            <person name="Baxter L."/>
            <person name="Beisel K.W."/>
            <person name="Bersano T."/>
            <person name="Bono H."/>
            <person name="Chalk A.M."/>
            <person name="Chiu K.P."/>
            <person name="Choudhary V."/>
            <person name="Christoffels A."/>
            <person name="Clutterbuck D.R."/>
            <person name="Crowe M.L."/>
            <person name="Dalla E."/>
            <person name="Dalrymple B.P."/>
            <person name="de Bono B."/>
            <person name="Della Gatta G."/>
            <person name="di Bernardo D."/>
            <person name="Down T."/>
            <person name="Engstrom P."/>
            <person name="Fagiolini M."/>
            <person name="Faulkner G."/>
            <person name="Fletcher C.F."/>
            <person name="Fukushima T."/>
            <person name="Furuno M."/>
            <person name="Futaki S."/>
            <person name="Gariboldi M."/>
            <person name="Georgii-Hemming P."/>
            <person name="Gingeras T.R."/>
            <person name="Gojobori T."/>
            <person name="Green R.E."/>
            <person name="Gustincich S."/>
            <person name="Harbers M."/>
            <person name="Hayashi Y."/>
            <person name="Hensch T.K."/>
            <person name="Hirokawa N."/>
            <person name="Hill D."/>
            <person name="Huminiecki L."/>
            <person name="Iacono M."/>
            <person name="Ikeo K."/>
            <person name="Iwama A."/>
            <person name="Ishikawa T."/>
            <person name="Jakt M."/>
            <person name="Kanapin A."/>
            <person name="Katoh M."/>
            <person name="Kawasawa Y."/>
            <person name="Kelso J."/>
            <person name="Kitamura H."/>
            <person name="Kitano H."/>
            <person name="Kollias G."/>
            <person name="Krishnan S.P."/>
            <person name="Kruger A."/>
            <person name="Kummerfeld S.K."/>
            <person name="Kurochkin I.V."/>
            <person name="Lareau L.F."/>
            <person name="Lazarevic D."/>
            <person name="Lipovich L."/>
            <person name="Liu J."/>
            <person name="Liuni S."/>
            <person name="McWilliam S."/>
            <person name="Madan Babu M."/>
            <person name="Madera M."/>
            <person name="Marchionni L."/>
            <person name="Matsuda H."/>
            <person name="Matsuzawa S."/>
            <person name="Miki H."/>
            <person name="Mignone F."/>
            <person name="Miyake S."/>
            <person name="Morris K."/>
            <person name="Mottagui-Tabar S."/>
            <person name="Mulder N."/>
            <person name="Nakano N."/>
            <person name="Nakauchi H."/>
            <person name="Ng P."/>
            <person name="Nilsson R."/>
            <person name="Nishiguchi S."/>
            <person name="Nishikawa S."/>
            <person name="Nori F."/>
            <person name="Ohara O."/>
            <person name="Okazaki Y."/>
            <person name="Orlando V."/>
            <person name="Pang K.C."/>
            <person name="Pavan W.J."/>
            <person name="Pavesi G."/>
            <person name="Pesole G."/>
            <person name="Petrovsky N."/>
            <person name="Piazza S."/>
            <person name="Reed J."/>
            <person name="Reid J.F."/>
            <person name="Ring B.Z."/>
            <person name="Ringwald M."/>
            <person name="Rost B."/>
            <person name="Ruan Y."/>
            <person name="Salzberg S.L."/>
            <person name="Sandelin A."/>
            <person name="Schneider C."/>
            <person name="Schoenbach C."/>
            <person name="Sekiguchi K."/>
            <person name="Semple C.A."/>
            <person name="Seno S."/>
            <person name="Sessa L."/>
            <person name="Sheng Y."/>
            <person name="Shibata Y."/>
            <person name="Shimada H."/>
            <person name="Shimada K."/>
            <person name="Silva D."/>
            <person name="Sinclair B."/>
            <person name="Sperling S."/>
            <person name="Stupka E."/>
            <person name="Sugiura K."/>
            <person name="Sultana R."/>
            <person name="Takenaka Y."/>
            <person name="Taki K."/>
            <person name="Tammoja K."/>
            <person name="Tan S.L."/>
            <person name="Tang S."/>
            <person name="Taylor M.S."/>
            <person name="Tegner J."/>
            <person name="Teichmann S.A."/>
            <person name="Ueda H.R."/>
            <person name="van Nimwegen E."/>
            <person name="Verardo R."/>
            <person name="Wei C.L."/>
            <person name="Yagi K."/>
            <person name="Yamanishi H."/>
            <person name="Zabarovsky E."/>
            <person name="Zhu S."/>
            <person name="Zimmer A."/>
            <person name="Hide W."/>
            <person name="Bult C."/>
            <person name="Grimmond S.M."/>
            <person name="Teasdale R.D."/>
            <person name="Liu E.T."/>
            <person name="Brusic V."/>
            <person name="Quackenbush J."/>
            <person name="Wahlestedt C."/>
            <person name="Mattick J.S."/>
            <person name="Hume D.A."/>
            <person name="Kai C."/>
            <person name="Sasaki D."/>
            <person name="Tomaru Y."/>
            <person name="Fukuda S."/>
            <person name="Kanamori-Katayama M."/>
            <person name="Suzuki M."/>
            <person name="Aoki J."/>
            <person name="Arakawa T."/>
            <person name="Iida J."/>
            <person name="Imamura K."/>
            <person name="Itoh M."/>
            <person name="Kato T."/>
            <person name="Kawaji H."/>
            <person name="Kawagashira N."/>
            <person name="Kawashima T."/>
            <person name="Kojima M."/>
            <person name="Kondo S."/>
            <person name="Konno H."/>
            <person name="Nakano K."/>
            <person name="Ninomiya N."/>
            <person name="Nishio T."/>
            <person name="Okada M."/>
            <person name="Plessy C."/>
            <person name="Shibata K."/>
            <person name="Shiraki T."/>
            <person name="Suzuki S."/>
            <person name="Tagami M."/>
            <person name="Waki K."/>
            <person name="Watahiki A."/>
            <person name="Okamura-Oho Y."/>
            <person name="Suzuki H."/>
            <person name="Kawai J."/>
            <person name="Hayashizaki Y."/>
        </authorList>
    </citation>
    <scope>NUCLEOTIDE SEQUENCE [LARGE SCALE MRNA]</scope>
    <source>
        <strain>C57BL/6J</strain>
        <tissue>Cerebellum</tissue>
    </source>
</reference>
<reference key="3">
    <citation type="journal article" date="2004" name="Genome Res.">
        <title>The status, quality, and expansion of the NIH full-length cDNA project: the Mammalian Gene Collection (MGC).</title>
        <authorList>
            <consortium name="The MGC Project Team"/>
        </authorList>
    </citation>
    <scope>NUCLEOTIDE SEQUENCE [LARGE SCALE MRNA]</scope>
    <source>
        <strain>FVB/N</strain>
        <tissue>Liver</tissue>
    </source>
</reference>
<reference key="4">
    <citation type="journal article" date="1999" name="J. Biol. Chem.">
        <title>Heterologous expression and functional characterization of a mouse renal organic anion transporter in mammalian cells.</title>
        <authorList>
            <person name="Kuze K."/>
            <person name="Graves P."/>
            <person name="Leahy A."/>
            <person name="Wilson P."/>
            <person name="Stuhlmann H."/>
            <person name="You G."/>
        </authorList>
    </citation>
    <scope>TISSUE SPECIFICITY</scope>
    <scope>MISCELLANEOUS</scope>
</reference>
<reference key="5">
    <citation type="journal article" date="2000" name="J. Biol. Chem.">
        <title>Regulation of mOAT-mediated organic anion transport by okadaic acid and protein kinase C in LLC-PK(1) cells.</title>
        <authorList>
            <person name="You G."/>
            <person name="Kuze K."/>
            <person name="Kohanski R.A."/>
            <person name="Amsler K."/>
            <person name="Henderson S."/>
        </authorList>
    </citation>
    <scope>SUBCELLULAR LOCATION</scope>
    <scope>MISCELLANEOUS</scope>
</reference>
<reference key="6">
    <citation type="journal article" date="2004" name="Biochem. J.">
        <title>Cysteine residues in the organic anion transporter mOAT1.</title>
        <authorList>
            <person name="Tanaka K."/>
            <person name="Zhou F."/>
            <person name="Kuze K."/>
            <person name="You G."/>
        </authorList>
    </citation>
    <scope>SUBCELLULAR LOCATION</scope>
    <scope>DOMAIN</scope>
    <scope>MISCELLANEOUS</scope>
    <scope>MUTAGENESIS OF CYS-49; CYS-78; CYS-99; CYS-122; CYS-172; CYS-183; CYS-200; CYS-326; CYS-335; CYS-379; CYS-402; CYS-427 AND CYS-434</scope>
</reference>
<reference key="7">
    <citation type="journal article" date="2004" name="J. Biol. Chem.">
        <title>Role of glycosylation in the organic anion transporter OAT1.</title>
        <authorList>
            <person name="Tanaka K."/>
            <person name="Xu W."/>
            <person name="Zhou F."/>
            <person name="You G."/>
        </authorList>
    </citation>
    <scope>MUTAGENESIS OF ASN-39</scope>
    <scope>GLYCOSYLATION AT ASN-56; ASN-86; ASN-91 AND ASN-107</scope>
    <scope>MISCELLANEOUS</scope>
</reference>
<reference key="8">
    <citation type="journal article" date="2005" name="Am. J. Physiol.">
        <title>Murine renal organic anion transporters mOAT1 and mOAT3 facilitate the transport of neuroactive tryptophan metabolites.</title>
        <authorList>
            <person name="Bahn A."/>
            <person name="Ljubojevic M."/>
            <person name="Lorenz H."/>
            <person name="Schultz C."/>
            <person name="Ghebremedhin E."/>
            <person name="Ugele B."/>
            <person name="Sabolic I."/>
            <person name="Burckhardt G."/>
            <person name="Hagos Y."/>
        </authorList>
    </citation>
    <scope>FUNCTION</scope>
    <scope>TRANSPORTER ACTIVITY</scope>
    <scope>SUBCELLULAR LOCATION</scope>
    <scope>TISSUE SPECIFICITY</scope>
</reference>
<reference key="9">
    <citation type="journal article" date="2010" name="Cell">
        <title>A tissue-specific atlas of mouse protein phosphorylation and expression.</title>
        <authorList>
            <person name="Huttlin E.L."/>
            <person name="Jedrychowski M.P."/>
            <person name="Elias J.E."/>
            <person name="Goswami T."/>
            <person name="Rad R."/>
            <person name="Beausoleil S.A."/>
            <person name="Villen J."/>
            <person name="Haas W."/>
            <person name="Sowa M.E."/>
            <person name="Gygi S.P."/>
        </authorList>
    </citation>
    <scope>IDENTIFICATION BY MASS SPECTROMETRY [LARGE SCALE ANALYSIS]</scope>
    <source>
        <tissue>Kidney</tissue>
    </source>
</reference>
<protein>
    <recommendedName>
        <fullName evidence="2">Solute carrier family 22 member 6</fullName>
    </recommendedName>
    <alternativeName>
        <fullName>Kidney-specific transport protein</fullName>
    </alternativeName>
    <alternativeName>
        <fullName evidence="12">Novel kidney transcript</fullName>
        <shortName evidence="12">mNKT</shortName>
    </alternativeName>
    <alternativeName>
        <fullName evidence="11">Organic anion transporter 1</fullName>
        <shortName evidence="11">mOAT1</shortName>
    </alternativeName>
    <alternativeName>
        <fullName>Renal organic anion transporter 1</fullName>
        <shortName>mROAT1</shortName>
    </alternativeName>
</protein>
<dbReference type="EMBL" id="U52842">
    <property type="protein sequence ID" value="AAC53112.1"/>
    <property type="molecule type" value="mRNA"/>
</dbReference>
<dbReference type="EMBL" id="AK035971">
    <property type="protein sequence ID" value="BAC29261.1"/>
    <property type="molecule type" value="mRNA"/>
</dbReference>
<dbReference type="EMBL" id="BC021647">
    <property type="protein sequence ID" value="AAH21647.1"/>
    <property type="molecule type" value="mRNA"/>
</dbReference>
<dbReference type="CCDS" id="CCDS29538.1"/>
<dbReference type="RefSeq" id="NP_032792.2">
    <property type="nucleotide sequence ID" value="NM_008766.3"/>
</dbReference>
<dbReference type="SMR" id="Q8VC69"/>
<dbReference type="BioGRID" id="201976">
    <property type="interactions" value="1"/>
</dbReference>
<dbReference type="FunCoup" id="Q8VC69">
    <property type="interactions" value="9"/>
</dbReference>
<dbReference type="STRING" id="10090.ENSMUSP00000010250"/>
<dbReference type="BindingDB" id="Q8VC69"/>
<dbReference type="ChEMBL" id="CHEMBL5653"/>
<dbReference type="DrugCentral" id="Q8VC69"/>
<dbReference type="GlyCosmos" id="Q8VC69">
    <property type="glycosylation" value="6 sites, No reported glycans"/>
</dbReference>
<dbReference type="GlyGen" id="Q8VC69">
    <property type="glycosylation" value="6 sites"/>
</dbReference>
<dbReference type="iPTMnet" id="Q8VC69"/>
<dbReference type="PhosphoSitePlus" id="Q8VC69"/>
<dbReference type="jPOST" id="Q8VC69"/>
<dbReference type="PaxDb" id="10090-ENSMUSP00000010250"/>
<dbReference type="ProteomicsDB" id="260886"/>
<dbReference type="Antibodypedia" id="28866">
    <property type="antibodies" value="280 antibodies from 32 providers"/>
</dbReference>
<dbReference type="DNASU" id="18399"/>
<dbReference type="Ensembl" id="ENSMUST00000010250.4">
    <property type="protein sequence ID" value="ENSMUSP00000010250.3"/>
    <property type="gene ID" value="ENSMUSG00000024650.6"/>
</dbReference>
<dbReference type="GeneID" id="18399"/>
<dbReference type="KEGG" id="mmu:18399"/>
<dbReference type="UCSC" id="uc008gme.2">
    <property type="organism name" value="mouse"/>
</dbReference>
<dbReference type="AGR" id="MGI:892001"/>
<dbReference type="CTD" id="9356"/>
<dbReference type="MGI" id="MGI:892001">
    <property type="gene designation" value="Slc22a6"/>
</dbReference>
<dbReference type="VEuPathDB" id="HostDB:ENSMUSG00000024650"/>
<dbReference type="eggNOG" id="KOG0255">
    <property type="taxonomic scope" value="Eukaryota"/>
</dbReference>
<dbReference type="GeneTree" id="ENSGT00940000157004"/>
<dbReference type="HOGENOM" id="CLU_001265_33_3_1"/>
<dbReference type="InParanoid" id="Q8VC69"/>
<dbReference type="OMA" id="WHCTGAS"/>
<dbReference type="OrthoDB" id="2544694at2759"/>
<dbReference type="PhylomeDB" id="Q8VC69"/>
<dbReference type="TreeFam" id="TF315847"/>
<dbReference type="Reactome" id="R-MMU-561048">
    <property type="pathway name" value="Organic anion transport"/>
</dbReference>
<dbReference type="SABIO-RK" id="Q8VC69"/>
<dbReference type="BioGRID-ORCS" id="18399">
    <property type="hits" value="9 hits in 78 CRISPR screens"/>
</dbReference>
<dbReference type="ChiTaRS" id="Slc22a6">
    <property type="organism name" value="mouse"/>
</dbReference>
<dbReference type="PRO" id="PR:Q8VC69"/>
<dbReference type="Proteomes" id="UP000000589">
    <property type="component" value="Chromosome 19"/>
</dbReference>
<dbReference type="RNAct" id="Q8VC69">
    <property type="molecule type" value="protein"/>
</dbReference>
<dbReference type="Bgee" id="ENSMUSG00000024650">
    <property type="expression patterns" value="Expressed in right kidney and 75 other cell types or tissues"/>
</dbReference>
<dbReference type="GO" id="GO:0009925">
    <property type="term" value="C:basal plasma membrane"/>
    <property type="evidence" value="ECO:0000250"/>
    <property type="project" value="UniProtKB"/>
</dbReference>
<dbReference type="GO" id="GO:0016323">
    <property type="term" value="C:basolateral plasma membrane"/>
    <property type="evidence" value="ECO:0000250"/>
    <property type="project" value="UniProtKB"/>
</dbReference>
<dbReference type="GO" id="GO:0005901">
    <property type="term" value="C:caveola"/>
    <property type="evidence" value="ECO:0007669"/>
    <property type="project" value="Ensembl"/>
</dbReference>
<dbReference type="GO" id="GO:0005886">
    <property type="term" value="C:plasma membrane"/>
    <property type="evidence" value="ECO:0000314"/>
    <property type="project" value="UniProtKB"/>
</dbReference>
<dbReference type="GO" id="GO:0032991">
    <property type="term" value="C:protein-containing complex"/>
    <property type="evidence" value="ECO:0007669"/>
    <property type="project" value="Ensembl"/>
</dbReference>
<dbReference type="GO" id="GO:0015139">
    <property type="term" value="F:alpha-ketoglutarate transmembrane transporter activity"/>
    <property type="evidence" value="ECO:0000250"/>
    <property type="project" value="UniProtKB"/>
</dbReference>
<dbReference type="GO" id="GO:0015297">
    <property type="term" value="F:antiporter activity"/>
    <property type="evidence" value="ECO:0000314"/>
    <property type="project" value="UniProtKB"/>
</dbReference>
<dbReference type="GO" id="GO:0031404">
    <property type="term" value="F:chloride ion binding"/>
    <property type="evidence" value="ECO:0007669"/>
    <property type="project" value="Ensembl"/>
</dbReference>
<dbReference type="GO" id="GO:0042802">
    <property type="term" value="F:identical protein binding"/>
    <property type="evidence" value="ECO:0007669"/>
    <property type="project" value="Ensembl"/>
</dbReference>
<dbReference type="GO" id="GO:0008514">
    <property type="term" value="F:organic anion transmembrane transporter activity"/>
    <property type="evidence" value="ECO:0000314"/>
    <property type="project" value="UniProtKB"/>
</dbReference>
<dbReference type="GO" id="GO:0015132">
    <property type="term" value="F:prostaglandin transmembrane transporter activity"/>
    <property type="evidence" value="ECO:0000250"/>
    <property type="project" value="UniProtKB"/>
</dbReference>
<dbReference type="GO" id="GO:0015347">
    <property type="term" value="F:sodium-independent organic anion transmembrane transporter activity"/>
    <property type="evidence" value="ECO:0000250"/>
    <property type="project" value="UniProtKB"/>
</dbReference>
<dbReference type="GO" id="GO:0005452">
    <property type="term" value="F:solute:inorganic anion antiporter activity"/>
    <property type="evidence" value="ECO:0000250"/>
    <property type="project" value="UniProtKB"/>
</dbReference>
<dbReference type="GO" id="GO:0042910">
    <property type="term" value="F:xenobiotic transmembrane transporter activity"/>
    <property type="evidence" value="ECO:0000250"/>
    <property type="project" value="UniProtKB"/>
</dbReference>
<dbReference type="GO" id="GO:0015742">
    <property type="term" value="P:alpha-ketoglutarate transport"/>
    <property type="evidence" value="ECO:0000250"/>
    <property type="project" value="UniProtKB"/>
</dbReference>
<dbReference type="GO" id="GO:0072237">
    <property type="term" value="P:metanephric proximal tubule development"/>
    <property type="evidence" value="ECO:0007669"/>
    <property type="project" value="Ensembl"/>
</dbReference>
<dbReference type="GO" id="GO:0006820">
    <property type="term" value="P:monoatomic anion transport"/>
    <property type="evidence" value="ECO:0000314"/>
    <property type="project" value="MGI"/>
</dbReference>
<dbReference type="GO" id="GO:0015711">
    <property type="term" value="P:organic anion transport"/>
    <property type="evidence" value="ECO:0000315"/>
    <property type="project" value="UniProtKB"/>
</dbReference>
<dbReference type="GO" id="GO:0015732">
    <property type="term" value="P:prostaglandin transport"/>
    <property type="evidence" value="ECO:0000250"/>
    <property type="project" value="UniProtKB"/>
</dbReference>
<dbReference type="GO" id="GO:0097254">
    <property type="term" value="P:renal tubular secretion"/>
    <property type="evidence" value="ECO:0000315"/>
    <property type="project" value="UniProtKB"/>
</dbReference>
<dbReference type="GO" id="GO:0043252">
    <property type="term" value="P:sodium-independent organic anion transport"/>
    <property type="evidence" value="ECO:0007669"/>
    <property type="project" value="Ensembl"/>
</dbReference>
<dbReference type="FunFam" id="1.20.1250.20:FF:000023">
    <property type="entry name" value="Solute carrier family 22 member 6"/>
    <property type="match status" value="1"/>
</dbReference>
<dbReference type="Gene3D" id="1.20.1250.20">
    <property type="entry name" value="MFS general substrate transporter like domains"/>
    <property type="match status" value="1"/>
</dbReference>
<dbReference type="InterPro" id="IPR020846">
    <property type="entry name" value="MFS_dom"/>
</dbReference>
<dbReference type="InterPro" id="IPR005828">
    <property type="entry name" value="MFS_sugar_transport-like"/>
</dbReference>
<dbReference type="InterPro" id="IPR036259">
    <property type="entry name" value="MFS_trans_sf"/>
</dbReference>
<dbReference type="InterPro" id="IPR004749">
    <property type="entry name" value="Orgcat_transp/SVOP"/>
</dbReference>
<dbReference type="NCBIfam" id="TIGR00898">
    <property type="entry name" value="2A0119"/>
    <property type="match status" value="1"/>
</dbReference>
<dbReference type="PANTHER" id="PTHR24064">
    <property type="entry name" value="SOLUTE CARRIER FAMILY 22 MEMBER"/>
    <property type="match status" value="1"/>
</dbReference>
<dbReference type="Pfam" id="PF00083">
    <property type="entry name" value="Sugar_tr"/>
    <property type="match status" value="1"/>
</dbReference>
<dbReference type="SUPFAM" id="SSF103473">
    <property type="entry name" value="MFS general substrate transporter"/>
    <property type="match status" value="1"/>
</dbReference>
<dbReference type="PROSITE" id="PS50850">
    <property type="entry name" value="MFS"/>
    <property type="match status" value="1"/>
</dbReference>
<feature type="chain" id="PRO_0000324168" description="Solute carrier family 22 member 6">
    <location>
        <begin position="1"/>
        <end position="545"/>
    </location>
</feature>
<feature type="topological domain" description="Cytoplasmic" evidence="3">
    <location>
        <begin position="1"/>
        <end position="9"/>
    </location>
</feature>
<feature type="transmembrane region" description="Helical" evidence="3">
    <location>
        <begin position="10"/>
        <end position="30"/>
    </location>
</feature>
<feature type="topological domain" description="Extracellular" evidence="3">
    <location>
        <begin position="31"/>
        <end position="129"/>
    </location>
</feature>
<feature type="transmembrane region" description="Helical" evidence="3">
    <location>
        <begin position="130"/>
        <end position="150"/>
    </location>
</feature>
<feature type="topological domain" description="Cytoplasmic" evidence="3">
    <location>
        <begin position="151"/>
        <end position="157"/>
    </location>
</feature>
<feature type="transmembrane region" description="Helical" evidence="3">
    <location>
        <begin position="158"/>
        <end position="177"/>
    </location>
</feature>
<feature type="topological domain" description="Extracellular" evidence="3">
    <location>
        <begin position="178"/>
        <end position="180"/>
    </location>
</feature>
<feature type="transmembrane region" description="Helical" evidence="3">
    <location>
        <begin position="181"/>
        <end position="201"/>
    </location>
</feature>
<feature type="topological domain" description="Cytoplasmic" evidence="3">
    <location>
        <begin position="202"/>
        <end position="218"/>
    </location>
</feature>
<feature type="transmembrane region" description="Helical" evidence="3">
    <location>
        <begin position="219"/>
        <end position="239"/>
    </location>
</feature>
<feature type="topological domain" description="Extracellular" evidence="3">
    <location>
        <begin position="240"/>
        <end position="242"/>
    </location>
</feature>
<feature type="transmembrane region" description="Helical" evidence="3">
    <location>
        <begin position="243"/>
        <end position="263"/>
    </location>
</feature>
<feature type="topological domain" description="Cytoplasmic" evidence="3">
    <location>
        <begin position="264"/>
        <end position="331"/>
    </location>
</feature>
<feature type="transmembrane region" description="Helical" evidence="3">
    <location>
        <begin position="332"/>
        <end position="352"/>
    </location>
</feature>
<feature type="topological domain" description="Extracellular" evidence="3">
    <location>
        <begin position="353"/>
        <end position="362"/>
    </location>
</feature>
<feature type="transmembrane region" description="Helical" evidence="3">
    <location>
        <begin position="363"/>
        <end position="383"/>
    </location>
</feature>
<feature type="topological domain" description="Cytoplasmic" evidence="3">
    <location>
        <begin position="384"/>
        <end position="389"/>
    </location>
</feature>
<feature type="transmembrane region" description="Helical" evidence="3">
    <location>
        <begin position="390"/>
        <end position="410"/>
    </location>
</feature>
<feature type="topological domain" description="Extracellular" evidence="3">
    <location>
        <begin position="411"/>
        <end position="419"/>
    </location>
</feature>
<feature type="transmembrane region" description="Helical" evidence="3">
    <location>
        <begin position="420"/>
        <end position="440"/>
    </location>
</feature>
<feature type="topological domain" description="Cytoplasmic" evidence="3">
    <location>
        <begin position="441"/>
        <end position="450"/>
    </location>
</feature>
<feature type="transmembrane region" description="Helical" evidence="3">
    <location>
        <begin position="451"/>
        <end position="471"/>
    </location>
</feature>
<feature type="topological domain" description="Extracellular" evidence="3">
    <location>
        <begin position="472"/>
        <end position="478"/>
    </location>
</feature>
<feature type="transmembrane region" description="Helical" evidence="3">
    <location>
        <begin position="479"/>
        <end position="499"/>
    </location>
</feature>
<feature type="topological domain" description="Cytoplasmic" evidence="3">
    <location>
        <begin position="500"/>
        <end position="545"/>
    </location>
</feature>
<feature type="region of interest" description="Disordered" evidence="4">
    <location>
        <begin position="515"/>
        <end position="545"/>
    </location>
</feature>
<feature type="compositionally biased region" description="Low complexity" evidence="4">
    <location>
        <begin position="522"/>
        <end position="531"/>
    </location>
</feature>
<feature type="compositionally biased region" description="Polar residues" evidence="4">
    <location>
        <begin position="536"/>
        <end position="545"/>
    </location>
</feature>
<feature type="glycosylation site" description="N-linked (GlcNAc...) asparagine" evidence="3">
    <location>
        <position position="39"/>
    </location>
</feature>
<feature type="glycosylation site" description="N-linked (GlcNAc...) asparagine" evidence="6">
    <location>
        <position position="56"/>
    </location>
</feature>
<feature type="glycosylation site" description="N-linked (GlcNAc...) asparagine" evidence="6">
    <location>
        <position position="86"/>
    </location>
</feature>
<feature type="glycosylation site" description="N-linked (GlcNAc...) asparagine" evidence="6">
    <location>
        <position position="91"/>
    </location>
</feature>
<feature type="glycosylation site" description="N-linked (GlcNAc...) asparagine" evidence="6">
    <location>
        <position position="107"/>
    </location>
</feature>
<feature type="glycosylation site" description="N-linked (GlcNAc...) asparagine" evidence="3">
    <location>
        <position position="178"/>
    </location>
</feature>
<feature type="mutagenesis site" description="Complete loss of PAH transport activity." evidence="6">
    <original>N</original>
    <variation>Q</variation>
    <location>
        <position position="39"/>
    </location>
</feature>
<feature type="mutagenesis site" description="Decreased cell surface expression level and PAH transport activity. Complete loss of PAH transport activity; when associated with A-78; A-99; A-122; A-172; A-183; A-200; A-362; A-335; A-379; A-402; A-427 and A-434." evidence="7">
    <original>C</original>
    <variation>A</variation>
    <location>
        <position position="49"/>
    </location>
</feature>
<feature type="mutagenesis site" description="Decreased cell surface expression level and PAH transport activity. Complete loss of PAH transport activity; when associated with A-49; A-78; A-99; A-172; A-183; A-200; A-362; A-335; A-379; A-402; A-427 and A-434." evidence="7">
    <original>C</original>
    <variation>A</variation>
    <location>
        <position position="122"/>
    </location>
</feature>
<feature type="mutagenesis site" description="Decreased cell surface expression level and PAH transport activity. Complete loss of PAH transport activity; when associated with A-49; A-78; A-99; A-122; A-172; A-200; A-362; A-335; A-379; A-402; A-427 and A-434." evidence="7">
    <original>C</original>
    <variation>A</variation>
    <location>
        <position position="183"/>
    </location>
</feature>
<feature type="mutagenesis site" description="Decreased cell surface expression level and PAH transport activity. 80% decrease of PAH transport activity; when associated with A-49; A-122 and A-183. Complete loss of PAH transport activity; when associated with A-49; A-78; A-99; A-122; A-172; A-183; A-200; A-362; A-335; A-379; A-402 and A-427." evidence="7">
    <original>C</original>
    <variation>A</variation>
    <location>
        <position position="434"/>
    </location>
</feature>
<feature type="sequence conflict" description="In Ref. 1; AAC53112." evidence="13" ref="1">
    <original>W</original>
    <variation>R</variation>
    <location>
        <position position="66"/>
    </location>
</feature>
<comment type="function">
    <text evidence="2 8">Secondary active transporter that functions as a Na(+)-independent organic anion (OA)/dicarboxylate antiporter where the uptake of one molecule of OA into the cell is coupled with an efflux of one molecule of intracellular dicarboxylate such as 2-oxoglutarate or glutarate (PubMed:15944205). Mediates the uptake of OA across the basolateral side of proximal tubule epithelial cells, thereby contributing to the renal elimination of endogenous OA from the systemic circulation into the urine (By similarity). Functions as a biopterin transporters involved in the uptake and the secretion of coenzymes tetrahydrobiopterin (BH4), dihydrobiopterin (BH2) and sepiapterin to urine, thereby determining baseline levels of blood biopterins (By similarity). Transports prostaglandin E2 (PGE2) and prostaglandin F2-alpha (PGF2-alpha) and may contribute to their renal excretion (By similarity). Involved in the transport of neuroactive tryptophan metabolites kynurenate (KYNA) and xanthurenate (XA) (PubMed:15944205). May transport glutamate. Also involved in the disposition of uremic toxins and potentially toxic xenobiotics by the renal organic anion secretory pathway, helping reduce their undesired toxicological effects on the body (By similarity). Uremic toxins include the indoxyl sulfate (IS), hippurate/N-benzoylglycine (HA), indole acetate (IA) and 3-carboxy-4- methyl-5-propyl-2-furanpropionate(CMPF) and urate (By similarity). Xenobiotics include the mycotoxin ochratoxin (OTA) (By similarity). May also contribute to the transport of organic compounds in testes across the blood-testis-barrier (By similarity).</text>
</comment>
<comment type="catalytic activity">
    <reaction evidence="2">
        <text>(6R)-L-erythro-5,6,7,8-tetrahydrobiopterin(out) + a dicarboxylate(in) = (6R)-L-erythro-5,6,7,8-tetrahydrobiopterin(in) + a dicarboxylate(out)</text>
        <dbReference type="Rhea" id="RHEA:76071"/>
        <dbReference type="ChEBI" id="CHEBI:28965"/>
        <dbReference type="ChEBI" id="CHEBI:59560"/>
    </reaction>
</comment>
<comment type="catalytic activity">
    <reaction evidence="2">
        <text>L-erythro-7,8-dihydrobiopterin(out) + a dicarboxylate(in) = L-erythro-7,8-dihydrobiopterin(in) + a dicarboxylate(out)</text>
        <dbReference type="Rhea" id="RHEA:76075"/>
        <dbReference type="ChEBI" id="CHEBI:28965"/>
        <dbReference type="ChEBI" id="CHEBI:43029"/>
    </reaction>
</comment>
<comment type="catalytic activity">
    <reaction evidence="2">
        <text>L-sepiapterin(out) + a dicarboxylate(in) = L-sepiapterin(in) + a dicarboxylate(out)</text>
        <dbReference type="Rhea" id="RHEA:76079"/>
        <dbReference type="ChEBI" id="CHEBI:28965"/>
        <dbReference type="ChEBI" id="CHEBI:194527"/>
    </reaction>
</comment>
<comment type="catalytic activity">
    <reaction evidence="2">
        <text>prostaglandin F2alpha(out) + a dicarboxylate(in) = prostaglandin F2alpha(in) + a dicarboxylate(out)</text>
        <dbReference type="Rhea" id="RHEA:76119"/>
        <dbReference type="ChEBI" id="CHEBI:28965"/>
        <dbReference type="ChEBI" id="CHEBI:57404"/>
    </reaction>
</comment>
<comment type="catalytic activity">
    <reaction evidence="2">
        <text>prostaglandin E2(out) + a dicarboxylate(in) = prostaglandin E2(in) + a dicarboxylate(out)</text>
        <dbReference type="Rhea" id="RHEA:76123"/>
        <dbReference type="ChEBI" id="CHEBI:28965"/>
        <dbReference type="ChEBI" id="CHEBI:606564"/>
    </reaction>
</comment>
<comment type="catalytic activity">
    <reaction evidence="1">
        <text>3',5'-cyclic AMP(out) + a dicarboxylate(in) = 3',5'-cyclic AMP(in) + a dicarboxylate(out)</text>
        <dbReference type="Rhea" id="RHEA:76127"/>
        <dbReference type="ChEBI" id="CHEBI:28965"/>
        <dbReference type="ChEBI" id="CHEBI:58165"/>
    </reaction>
</comment>
<comment type="catalytic activity">
    <reaction evidence="1">
        <text>3',5'-cyclic GMP(out) + a dicarboxylate(in) = 3',5'-cyclic GMP(in) + a dicarboxylate(out)</text>
        <dbReference type="Rhea" id="RHEA:76131"/>
        <dbReference type="ChEBI" id="CHEBI:28965"/>
        <dbReference type="ChEBI" id="CHEBI:57746"/>
    </reaction>
</comment>
<comment type="catalytic activity">
    <reaction evidence="1">
        <text>urate(out) + a dicarboxylate(in) = urate(in) + a dicarboxylate(out)</text>
        <dbReference type="Rhea" id="RHEA:76135"/>
        <dbReference type="ChEBI" id="CHEBI:17775"/>
        <dbReference type="ChEBI" id="CHEBI:28965"/>
    </reaction>
</comment>
<comment type="catalytic activity">
    <reaction evidence="8">
        <text>kynurenate(out) + glutarate(in) = kynurenate(in) + glutarate(out)</text>
        <dbReference type="Rhea" id="RHEA:75999"/>
        <dbReference type="ChEBI" id="CHEBI:30921"/>
        <dbReference type="ChEBI" id="CHEBI:58454"/>
    </reaction>
</comment>
<comment type="catalytic activity">
    <reaction evidence="2">
        <text>(indol-3-yl)acetate(out) + a dicarboxylate(in) = (indol-3-yl)acetate(in) + a dicarboxylate(out)</text>
        <dbReference type="Rhea" id="RHEA:75983"/>
        <dbReference type="ChEBI" id="CHEBI:28965"/>
        <dbReference type="ChEBI" id="CHEBI:30854"/>
    </reaction>
</comment>
<comment type="catalytic activity">
    <reaction evidence="2">
        <text>indoxyl sulfate(out) + a dicarboxylate(in) = indoxyl sulfate(in) + a dicarboxylate(out)</text>
        <dbReference type="Rhea" id="RHEA:75987"/>
        <dbReference type="ChEBI" id="CHEBI:28965"/>
        <dbReference type="ChEBI" id="CHEBI:144643"/>
    </reaction>
</comment>
<comment type="catalytic activity">
    <reaction evidence="2">
        <text>N-benzoylglycine(out) + a dicarboxylate(in) = N-benzoylglycine(in) + a dicarboxylate(out)</text>
        <dbReference type="Rhea" id="RHEA:75991"/>
        <dbReference type="ChEBI" id="CHEBI:28965"/>
        <dbReference type="ChEBI" id="CHEBI:606565"/>
    </reaction>
</comment>
<comment type="catalytic activity">
    <reaction evidence="2">
        <text>3-carboxy-4-methyl-5-propyl-2-furanpropanoate(out) + a dicarboxylate(in) = 3-carboxy-4-methyl-5-propyl-2-furanpropanoate(in) + a dicarboxylate(out)</text>
        <dbReference type="Rhea" id="RHEA:75995"/>
        <dbReference type="ChEBI" id="CHEBI:28965"/>
        <dbReference type="ChEBI" id="CHEBI:194524"/>
    </reaction>
</comment>
<comment type="subcellular location">
    <subcellularLocation>
        <location evidence="5 7 8">Basolateral cell membrane</location>
        <topology evidence="13">Multi-pass membrane protein</topology>
    </subcellularLocation>
    <subcellularLocation>
        <location evidence="2">Basal cell membrane</location>
        <topology evidence="13">Multi-pass membrane protein</topology>
    </subcellularLocation>
    <text evidence="8">Localized to the basolateral side of proximal convoluted tubules corresponding to tubule segments S1 and S2.</text>
</comment>
<comment type="tissue specificity">
    <text evidence="8 9 10">Expressed in kidney (PubMed:15944205, PubMed:9045672, PubMed:9880528). In kidney, restricted to the proximal convoluted tubule (representing S1 and S2 segments) (PubMed:15944205, PubMed:9045672). In brain, expressed in neurons of the cortex cerebri and hippocampus as well as in the ependymal cell layer of the choroid plexus (PubMed:15944205, PubMed:9045672).</text>
</comment>
<comment type="developmental stage">
    <text evidence="9">Developmentally regulated with significant expression beginning at 18 dpc and rising just before birth.</text>
</comment>
<comment type="domain">
    <text evidence="7">Multiple cysteine residues are necessary for proper targeting to the plasma membrane.</text>
</comment>
<comment type="PTM">
    <text evidence="6">Glycosylated. Glycosylation is necessary for proper targeting of the transporter to the plasma membrane.</text>
</comment>
<comment type="miscellaneous">
    <text evidence="2 5 6 7 9 10">Involved in the renal transport of a variety of drugs with well-known nephrotoxic potential, therefore may play a role in the etiology of the drug-associated nephrotoxicity (By similarity). Uptakes the diagnostic agent PAH/para-aminohippurate and clinically used drugs (PubMed:10744714, PubMed:14749323, PubMed:14979872, PubMed:9045672, PubMed:9880528). Mediates the bidirectional transport of PAH/para-aminohippurate (By similarity).</text>
</comment>
<comment type="similarity">
    <text evidence="13">Belongs to the major facilitator (TC 2.A.1) superfamily. Organic cation transporter (TC 2.A.1.19) family.</text>
</comment>
<gene>
    <name evidence="14" type="primary">Slc22a6</name>
    <name type="synonym">Nkt</name>
    <name type="synonym">Oat1</name>
</gene>
<keyword id="KW-1003">Cell membrane</keyword>
<keyword id="KW-0325">Glycoprotein</keyword>
<keyword id="KW-0472">Membrane</keyword>
<keyword id="KW-1185">Reference proteome</keyword>
<keyword id="KW-0812">Transmembrane</keyword>
<keyword id="KW-1133">Transmembrane helix</keyword>
<name>S22A6_MOUSE</name>
<evidence type="ECO:0000250" key="1">
    <source>
        <dbReference type="UniProtKB" id="O35956"/>
    </source>
</evidence>
<evidence type="ECO:0000250" key="2">
    <source>
        <dbReference type="UniProtKB" id="Q4U2R8"/>
    </source>
</evidence>
<evidence type="ECO:0000255" key="3"/>
<evidence type="ECO:0000256" key="4">
    <source>
        <dbReference type="SAM" id="MobiDB-lite"/>
    </source>
</evidence>
<evidence type="ECO:0000269" key="5">
    <source>
    </source>
</evidence>
<evidence type="ECO:0000269" key="6">
    <source>
    </source>
</evidence>
<evidence type="ECO:0000269" key="7">
    <source>
    </source>
</evidence>
<evidence type="ECO:0000269" key="8">
    <source>
    </source>
</evidence>
<evidence type="ECO:0000269" key="9">
    <source>
    </source>
</evidence>
<evidence type="ECO:0000269" key="10">
    <source>
    </source>
</evidence>
<evidence type="ECO:0000303" key="11">
    <source>
    </source>
</evidence>
<evidence type="ECO:0000303" key="12">
    <source>
    </source>
</evidence>
<evidence type="ECO:0000305" key="13"/>
<evidence type="ECO:0000312" key="14">
    <source>
        <dbReference type="MGI" id="MGI:892001"/>
    </source>
</evidence>
<organism>
    <name type="scientific">Mus musculus</name>
    <name type="common">Mouse</name>
    <dbReference type="NCBI Taxonomy" id="10090"/>
    <lineage>
        <taxon>Eukaryota</taxon>
        <taxon>Metazoa</taxon>
        <taxon>Chordata</taxon>
        <taxon>Craniata</taxon>
        <taxon>Vertebrata</taxon>
        <taxon>Euteleostomi</taxon>
        <taxon>Mammalia</taxon>
        <taxon>Eutheria</taxon>
        <taxon>Euarchontoglires</taxon>
        <taxon>Glires</taxon>
        <taxon>Rodentia</taxon>
        <taxon>Myomorpha</taxon>
        <taxon>Muroidea</taxon>
        <taxon>Muridae</taxon>
        <taxon>Murinae</taxon>
        <taxon>Mus</taxon>
        <taxon>Mus</taxon>
    </lineage>
</organism>